<protein>
    <recommendedName>
        <fullName>Uncharacterized protein in rhdA 5'region</fullName>
    </recommendedName>
    <alternativeName>
        <fullName>ORF1</fullName>
    </alternativeName>
</protein>
<sequence>DVEAGFIEFRDLLGHCRFRDCRHDREPGCALLKALDEGRIQPQRMASYRHILASLPEPEY</sequence>
<accession>Q44557</accession>
<dbReference type="EMBL" id="L42346">
    <property type="protein sequence ID" value="AAB03237.1"/>
    <property type="molecule type" value="Genomic_DNA"/>
</dbReference>
<dbReference type="PIR" id="S62188">
    <property type="entry name" value="S62188"/>
</dbReference>
<dbReference type="SMR" id="Q44557"/>
<dbReference type="Gene3D" id="1.10.40.50">
    <property type="entry name" value="Probable gtpase engc, domain 3"/>
    <property type="match status" value="1"/>
</dbReference>
<dbReference type="InterPro" id="IPR027417">
    <property type="entry name" value="P-loop_NTPase"/>
</dbReference>
<dbReference type="SUPFAM" id="SSF52540">
    <property type="entry name" value="P-loop containing nucleoside triphosphate hydrolases"/>
    <property type="match status" value="1"/>
</dbReference>
<proteinExistence type="predicted"/>
<feature type="chain" id="PRO_0000169742" description="Uncharacterized protein in rhdA 5'region">
    <location>
        <begin position="1" status="less than"/>
        <end position="60"/>
    </location>
</feature>
<feature type="non-terminal residue">
    <location>
        <position position="1"/>
    </location>
</feature>
<evidence type="ECO:0000305" key="1"/>
<reference key="1">
    <citation type="journal article" date="1996" name="Eur. J. Biochem.">
        <title>Cloning, sequence analysis and overexpression of the rhodanese gene of Azotobacter vinelandii.</title>
        <authorList>
            <person name="Colnaghi R."/>
            <person name="Pagani S."/>
            <person name="Kennedy C."/>
            <person name="Drummond M."/>
        </authorList>
    </citation>
    <scope>NUCLEOTIDE SEQUENCE [GENOMIC DNA]</scope>
    <source>
        <strain>OP / UW136</strain>
    </source>
</reference>
<name>YRH1_AZOVI</name>
<comment type="similarity">
    <text evidence="1">To E.coli YjeQ and H.influenzae HI_1714.</text>
</comment>
<organism>
    <name type="scientific">Azotobacter vinelandii</name>
    <dbReference type="NCBI Taxonomy" id="354"/>
    <lineage>
        <taxon>Bacteria</taxon>
        <taxon>Pseudomonadati</taxon>
        <taxon>Pseudomonadota</taxon>
        <taxon>Gammaproteobacteria</taxon>
        <taxon>Pseudomonadales</taxon>
        <taxon>Pseudomonadaceae</taxon>
        <taxon>Azotobacter</taxon>
    </lineage>
</organism>